<accession>Q8ZPM2</accession>
<dbReference type="EC" id="7.-.-.-" evidence="1"/>
<dbReference type="EMBL" id="AE006468">
    <property type="protein sequence ID" value="AAL20379.1"/>
    <property type="molecule type" value="Genomic_DNA"/>
</dbReference>
<dbReference type="RefSeq" id="NP_460420.1">
    <property type="nucleotide sequence ID" value="NC_003197.2"/>
</dbReference>
<dbReference type="RefSeq" id="WP_000915668.1">
    <property type="nucleotide sequence ID" value="NC_003197.2"/>
</dbReference>
<dbReference type="SMR" id="Q8ZPM2"/>
<dbReference type="STRING" id="99287.STM1457"/>
<dbReference type="PaxDb" id="99287-STM1457"/>
<dbReference type="GeneID" id="1252975"/>
<dbReference type="KEGG" id="stm:STM1457"/>
<dbReference type="PATRIC" id="fig|99287.12.peg.1540"/>
<dbReference type="HOGENOM" id="CLU_010808_2_1_6"/>
<dbReference type="OMA" id="QQLYWYS"/>
<dbReference type="PhylomeDB" id="Q8ZPM2"/>
<dbReference type="BioCyc" id="SENT99287:STM1457-MONOMER"/>
<dbReference type="Proteomes" id="UP000001014">
    <property type="component" value="Chromosome"/>
</dbReference>
<dbReference type="GO" id="GO:0005886">
    <property type="term" value="C:plasma membrane"/>
    <property type="evidence" value="ECO:0007669"/>
    <property type="project" value="UniProtKB-SubCell"/>
</dbReference>
<dbReference type="GO" id="GO:0051539">
    <property type="term" value="F:4 iron, 4 sulfur cluster binding"/>
    <property type="evidence" value="ECO:0007669"/>
    <property type="project" value="UniProtKB-KW"/>
</dbReference>
<dbReference type="GO" id="GO:0009055">
    <property type="term" value="F:electron transfer activity"/>
    <property type="evidence" value="ECO:0007669"/>
    <property type="project" value="InterPro"/>
</dbReference>
<dbReference type="GO" id="GO:0046872">
    <property type="term" value="F:metal ion binding"/>
    <property type="evidence" value="ECO:0007669"/>
    <property type="project" value="UniProtKB-KW"/>
</dbReference>
<dbReference type="GO" id="GO:0022900">
    <property type="term" value="P:electron transport chain"/>
    <property type="evidence" value="ECO:0007669"/>
    <property type="project" value="UniProtKB-UniRule"/>
</dbReference>
<dbReference type="Gene3D" id="3.30.70.20">
    <property type="match status" value="1"/>
</dbReference>
<dbReference type="Gene3D" id="3.40.50.11540">
    <property type="entry name" value="NADH-ubiquinone oxidoreductase 51kDa subunit"/>
    <property type="match status" value="1"/>
</dbReference>
<dbReference type="HAMAP" id="MF_00461">
    <property type="entry name" value="RsxC_RnfC"/>
    <property type="match status" value="1"/>
</dbReference>
<dbReference type="InterPro" id="IPR017896">
    <property type="entry name" value="4Fe4S_Fe-S-bd"/>
</dbReference>
<dbReference type="InterPro" id="IPR017900">
    <property type="entry name" value="4Fe4S_Fe_S_CS"/>
</dbReference>
<dbReference type="InterPro" id="IPR010208">
    <property type="entry name" value="Ion_transpt_RnfC/RsxC"/>
</dbReference>
<dbReference type="InterPro" id="IPR011538">
    <property type="entry name" value="Nuo51_FMN-bd"/>
</dbReference>
<dbReference type="InterPro" id="IPR037225">
    <property type="entry name" value="Nuo51_FMN-bd_sf"/>
</dbReference>
<dbReference type="InterPro" id="IPR026902">
    <property type="entry name" value="RnfC_N"/>
</dbReference>
<dbReference type="InterPro" id="IPR019554">
    <property type="entry name" value="Soluble_ligand-bd"/>
</dbReference>
<dbReference type="NCBIfam" id="NF003454">
    <property type="entry name" value="PRK05035.1"/>
    <property type="match status" value="1"/>
</dbReference>
<dbReference type="NCBIfam" id="TIGR01945">
    <property type="entry name" value="rnfC"/>
    <property type="match status" value="1"/>
</dbReference>
<dbReference type="PANTHER" id="PTHR43034">
    <property type="entry name" value="ION-TRANSLOCATING OXIDOREDUCTASE COMPLEX SUBUNIT C"/>
    <property type="match status" value="1"/>
</dbReference>
<dbReference type="PANTHER" id="PTHR43034:SF2">
    <property type="entry name" value="ION-TRANSLOCATING OXIDOREDUCTASE COMPLEX SUBUNIT C"/>
    <property type="match status" value="1"/>
</dbReference>
<dbReference type="Pfam" id="PF01512">
    <property type="entry name" value="Complex1_51K"/>
    <property type="match status" value="1"/>
</dbReference>
<dbReference type="Pfam" id="PF12838">
    <property type="entry name" value="Fer4_7"/>
    <property type="match status" value="1"/>
</dbReference>
<dbReference type="Pfam" id="PF13375">
    <property type="entry name" value="RnfC_N"/>
    <property type="match status" value="1"/>
</dbReference>
<dbReference type="Pfam" id="PF10531">
    <property type="entry name" value="SLBB"/>
    <property type="match status" value="1"/>
</dbReference>
<dbReference type="SUPFAM" id="SSF46548">
    <property type="entry name" value="alpha-helical ferredoxin"/>
    <property type="match status" value="1"/>
</dbReference>
<dbReference type="SUPFAM" id="SSF142019">
    <property type="entry name" value="Nqo1 FMN-binding domain-like"/>
    <property type="match status" value="1"/>
</dbReference>
<dbReference type="PROSITE" id="PS00198">
    <property type="entry name" value="4FE4S_FER_1"/>
    <property type="match status" value="2"/>
</dbReference>
<dbReference type="PROSITE" id="PS51379">
    <property type="entry name" value="4FE4S_FER_2"/>
    <property type="match status" value="2"/>
</dbReference>
<comment type="function">
    <text evidence="1">Part of a membrane-bound complex that couples electron transfer with translocation of ions across the membrane. Required to maintain the reduced state of SoxR.</text>
</comment>
<comment type="cofactor">
    <cofactor evidence="1">
        <name>[4Fe-4S] cluster</name>
        <dbReference type="ChEBI" id="CHEBI:49883"/>
    </cofactor>
    <text evidence="1">Binds 2 [4Fe-4S] clusters per subunit.</text>
</comment>
<comment type="subunit">
    <text evidence="1">The complex is composed of six subunits: RsxA, RsxB, RsxC, RsxD, RsxE and RsxG.</text>
</comment>
<comment type="subcellular location">
    <subcellularLocation>
        <location evidence="1">Cell inner membrane</location>
        <topology evidence="1">Peripheral membrane protein</topology>
    </subcellularLocation>
</comment>
<comment type="similarity">
    <text evidence="1">Belongs to the 4Fe4S bacterial-type ferredoxin family. RnfC subfamily.</text>
</comment>
<organism>
    <name type="scientific">Salmonella typhimurium (strain LT2 / SGSC1412 / ATCC 700720)</name>
    <dbReference type="NCBI Taxonomy" id="99287"/>
    <lineage>
        <taxon>Bacteria</taxon>
        <taxon>Pseudomonadati</taxon>
        <taxon>Pseudomonadota</taxon>
        <taxon>Gammaproteobacteria</taxon>
        <taxon>Enterobacterales</taxon>
        <taxon>Enterobacteriaceae</taxon>
        <taxon>Salmonella</taxon>
    </lineage>
</organism>
<keyword id="KW-0004">4Fe-4S</keyword>
<keyword id="KW-0997">Cell inner membrane</keyword>
<keyword id="KW-1003">Cell membrane</keyword>
<keyword id="KW-0249">Electron transport</keyword>
<keyword id="KW-0408">Iron</keyword>
<keyword id="KW-0411">Iron-sulfur</keyword>
<keyword id="KW-0472">Membrane</keyword>
<keyword id="KW-0479">Metal-binding</keyword>
<keyword id="KW-1185">Reference proteome</keyword>
<keyword id="KW-0677">Repeat</keyword>
<keyword id="KW-1278">Translocase</keyword>
<keyword id="KW-0813">Transport</keyword>
<protein>
    <recommendedName>
        <fullName evidence="1">Ion-translocating oxidoreductase complex subunit C</fullName>
        <ecNumber evidence="1">7.-.-.-</ecNumber>
    </recommendedName>
    <alternativeName>
        <fullName evidence="1">Rsx electron transport complex subunit C</fullName>
    </alternativeName>
</protein>
<evidence type="ECO:0000255" key="1">
    <source>
        <dbReference type="HAMAP-Rule" id="MF_00461"/>
    </source>
</evidence>
<evidence type="ECO:0000256" key="2">
    <source>
        <dbReference type="SAM" id="MobiDB-lite"/>
    </source>
</evidence>
<sequence>MLKLFSAFRKDKIWDFDGGIHPPEMKTQSNGTPLRQVPLAPRFVIPLKQHIGAEGELCVSVGDRVLRGQALTRGRGRMLPVHAPTSGTVIAIAPHSTAHPSALAELSVIIDADGEDRWIEREGWSDYRAHSREALIERIHQYGVAGLGGAGFPTGVKLQGGGDKITTLIINAAECEPYITADDRLMQDCAAQIVEGIRILAHILQPREVLIGIEDNKPQAISMLRAVLADAHDISLRVIPTKYPSGGAKQLTRILTGKQVPHGGRSSDIGVLMQNVGTAYAVKRAVIDGEPITERVVTLTGEAVSRPGNVWARLGTPVRHLLNDAGFCPSADQMVIMGGPLMGFTLPWLDVPVVKITNCLLAPSVTEMGAPQEEKSCIRCSACADACPADLLPQQLYWFSKGQQHDKATAHHIADCIECGACAWVCPSNIPLVQYFRQEKAEINAIRLEEKRAAEAKARFEARQARLEREKAARLARHKSAAVQPAAKDQDAIAAALARVKEKQAQATQPVVIQAGSQPDNSAVIAAREARKAQARAKQAAHPMADSAIPGDDPSKAAVEAAIARAKARKQEQQAGSEPAEPVDPRKAAVEAAIARAKARKQEQQAGSEPVEAVDPRKAAVEAAIARAKARKQEQQTGSEPAEAVDPRKAAVEAAIARAKARKQEQQTGSEPAEPIDPRKAAVEAAIARAKARKQEQQAGSEPAEPADPRKAAVAAAIARVQAKKAAQQQVVNED</sequence>
<proteinExistence type="inferred from homology"/>
<gene>
    <name evidence="1" type="primary">rsxC</name>
    <name type="ordered locus">STM1457</name>
</gene>
<reference key="1">
    <citation type="journal article" date="2001" name="Nature">
        <title>Complete genome sequence of Salmonella enterica serovar Typhimurium LT2.</title>
        <authorList>
            <person name="McClelland M."/>
            <person name="Sanderson K.E."/>
            <person name="Spieth J."/>
            <person name="Clifton S.W."/>
            <person name="Latreille P."/>
            <person name="Courtney L."/>
            <person name="Porwollik S."/>
            <person name="Ali J."/>
            <person name="Dante M."/>
            <person name="Du F."/>
            <person name="Hou S."/>
            <person name="Layman D."/>
            <person name="Leonard S."/>
            <person name="Nguyen C."/>
            <person name="Scott K."/>
            <person name="Holmes A."/>
            <person name="Grewal N."/>
            <person name="Mulvaney E."/>
            <person name="Ryan E."/>
            <person name="Sun H."/>
            <person name="Florea L."/>
            <person name="Miller W."/>
            <person name="Stoneking T."/>
            <person name="Nhan M."/>
            <person name="Waterston R."/>
            <person name="Wilson R.K."/>
        </authorList>
    </citation>
    <scope>NUCLEOTIDE SEQUENCE [LARGE SCALE GENOMIC DNA]</scope>
    <source>
        <strain>LT2 / SGSC1412 / ATCC 700720</strain>
    </source>
</reference>
<name>RSXC_SALTY</name>
<feature type="chain" id="PRO_0000073212" description="Ion-translocating oxidoreductase complex subunit C">
    <location>
        <begin position="1"/>
        <end position="735"/>
    </location>
</feature>
<feature type="domain" description="4Fe-4S ferredoxin-type 1" evidence="1">
    <location>
        <begin position="368"/>
        <end position="397"/>
    </location>
</feature>
<feature type="domain" description="4Fe-4S ferredoxin-type 2" evidence="1">
    <location>
        <begin position="407"/>
        <end position="436"/>
    </location>
</feature>
<feature type="region of interest" description="Disordered" evidence="2">
    <location>
        <begin position="538"/>
        <end position="715"/>
    </location>
</feature>
<feature type="compositionally biased region" description="Low complexity" evidence="2">
    <location>
        <begin position="556"/>
        <end position="565"/>
    </location>
</feature>
<feature type="binding site" evidence="1">
    <location>
        <position position="377"/>
    </location>
    <ligand>
        <name>[4Fe-4S] cluster</name>
        <dbReference type="ChEBI" id="CHEBI:49883"/>
        <label>1</label>
    </ligand>
</feature>
<feature type="binding site" evidence="1">
    <location>
        <position position="380"/>
    </location>
    <ligand>
        <name>[4Fe-4S] cluster</name>
        <dbReference type="ChEBI" id="CHEBI:49883"/>
        <label>1</label>
    </ligand>
</feature>
<feature type="binding site" evidence="1">
    <location>
        <position position="383"/>
    </location>
    <ligand>
        <name>[4Fe-4S] cluster</name>
        <dbReference type="ChEBI" id="CHEBI:49883"/>
        <label>1</label>
    </ligand>
</feature>
<feature type="binding site" evidence="1">
    <location>
        <position position="387"/>
    </location>
    <ligand>
        <name>[4Fe-4S] cluster</name>
        <dbReference type="ChEBI" id="CHEBI:49883"/>
        <label>2</label>
    </ligand>
</feature>
<feature type="binding site" evidence="1">
    <location>
        <position position="416"/>
    </location>
    <ligand>
        <name>[4Fe-4S] cluster</name>
        <dbReference type="ChEBI" id="CHEBI:49883"/>
        <label>2</label>
    </ligand>
</feature>
<feature type="binding site" evidence="1">
    <location>
        <position position="419"/>
    </location>
    <ligand>
        <name>[4Fe-4S] cluster</name>
        <dbReference type="ChEBI" id="CHEBI:49883"/>
        <label>2</label>
    </ligand>
</feature>
<feature type="binding site" evidence="1">
    <location>
        <position position="422"/>
    </location>
    <ligand>
        <name>[4Fe-4S] cluster</name>
        <dbReference type="ChEBI" id="CHEBI:49883"/>
        <label>2</label>
    </ligand>
</feature>
<feature type="binding site" evidence="1">
    <location>
        <position position="426"/>
    </location>
    <ligand>
        <name>[4Fe-4S] cluster</name>
        <dbReference type="ChEBI" id="CHEBI:49883"/>
        <label>1</label>
    </ligand>
</feature>